<name>NFUA_SALTI</name>
<reference key="1">
    <citation type="journal article" date="2001" name="Nature">
        <title>Complete genome sequence of a multiple drug resistant Salmonella enterica serovar Typhi CT18.</title>
        <authorList>
            <person name="Parkhill J."/>
            <person name="Dougan G."/>
            <person name="James K.D."/>
            <person name="Thomson N.R."/>
            <person name="Pickard D."/>
            <person name="Wain J."/>
            <person name="Churcher C.M."/>
            <person name="Mungall K.L."/>
            <person name="Bentley S.D."/>
            <person name="Holden M.T.G."/>
            <person name="Sebaihia M."/>
            <person name="Baker S."/>
            <person name="Basham D."/>
            <person name="Brooks K."/>
            <person name="Chillingworth T."/>
            <person name="Connerton P."/>
            <person name="Cronin A."/>
            <person name="Davis P."/>
            <person name="Davies R.M."/>
            <person name="Dowd L."/>
            <person name="White N."/>
            <person name="Farrar J."/>
            <person name="Feltwell T."/>
            <person name="Hamlin N."/>
            <person name="Haque A."/>
            <person name="Hien T.T."/>
            <person name="Holroyd S."/>
            <person name="Jagels K."/>
            <person name="Krogh A."/>
            <person name="Larsen T.S."/>
            <person name="Leather S."/>
            <person name="Moule S."/>
            <person name="O'Gaora P."/>
            <person name="Parry C."/>
            <person name="Quail M.A."/>
            <person name="Rutherford K.M."/>
            <person name="Simmonds M."/>
            <person name="Skelton J."/>
            <person name="Stevens K."/>
            <person name="Whitehead S."/>
            <person name="Barrell B.G."/>
        </authorList>
    </citation>
    <scope>NUCLEOTIDE SEQUENCE [LARGE SCALE GENOMIC DNA]</scope>
    <source>
        <strain>CT18</strain>
    </source>
</reference>
<reference key="2">
    <citation type="journal article" date="2003" name="J. Bacteriol.">
        <title>Comparative genomics of Salmonella enterica serovar Typhi strains Ty2 and CT18.</title>
        <authorList>
            <person name="Deng W."/>
            <person name="Liou S.-R."/>
            <person name="Plunkett G. III"/>
            <person name="Mayhew G.F."/>
            <person name="Rose D.J."/>
            <person name="Burland V."/>
            <person name="Kodoyianni V."/>
            <person name="Schwartz D.C."/>
            <person name="Blattner F.R."/>
        </authorList>
    </citation>
    <scope>NUCLEOTIDE SEQUENCE [LARGE SCALE GENOMIC DNA]</scope>
    <source>
        <strain>ATCC 700931 / Ty2</strain>
    </source>
</reference>
<accession>Q8Z223</accession>
<accession>Q7C5W1</accession>
<dbReference type="EMBL" id="AL513382">
    <property type="protein sequence ID" value="CAD08103.1"/>
    <property type="molecule type" value="Genomic_DNA"/>
</dbReference>
<dbReference type="EMBL" id="AE014613">
    <property type="protein sequence ID" value="AAO71465.1"/>
    <property type="molecule type" value="Genomic_DNA"/>
</dbReference>
<dbReference type="RefSeq" id="NP_458393.1">
    <property type="nucleotide sequence ID" value="NC_003198.1"/>
</dbReference>
<dbReference type="RefSeq" id="WP_000619394.1">
    <property type="nucleotide sequence ID" value="NZ_WSUR01000001.1"/>
</dbReference>
<dbReference type="SMR" id="Q8Z223"/>
<dbReference type="STRING" id="220341.gene:17588116"/>
<dbReference type="KEGG" id="stt:t3995"/>
<dbReference type="KEGG" id="sty:STY4285"/>
<dbReference type="PATRIC" id="fig|220341.7.peg.4379"/>
<dbReference type="eggNOG" id="COG0316">
    <property type="taxonomic scope" value="Bacteria"/>
</dbReference>
<dbReference type="eggNOG" id="COG0694">
    <property type="taxonomic scope" value="Bacteria"/>
</dbReference>
<dbReference type="HOGENOM" id="CLU_094569_0_0_6"/>
<dbReference type="OMA" id="CLAYCRP"/>
<dbReference type="Proteomes" id="UP000000541">
    <property type="component" value="Chromosome"/>
</dbReference>
<dbReference type="Proteomes" id="UP000002670">
    <property type="component" value="Chromosome"/>
</dbReference>
<dbReference type="GO" id="GO:0051539">
    <property type="term" value="F:4 iron, 4 sulfur cluster binding"/>
    <property type="evidence" value="ECO:0007669"/>
    <property type="project" value="UniProtKB-UniRule"/>
</dbReference>
<dbReference type="GO" id="GO:0005506">
    <property type="term" value="F:iron ion binding"/>
    <property type="evidence" value="ECO:0007669"/>
    <property type="project" value="InterPro"/>
</dbReference>
<dbReference type="GO" id="GO:0016226">
    <property type="term" value="P:iron-sulfur cluster assembly"/>
    <property type="evidence" value="ECO:0007669"/>
    <property type="project" value="UniProtKB-UniRule"/>
</dbReference>
<dbReference type="GO" id="GO:0051604">
    <property type="term" value="P:protein maturation"/>
    <property type="evidence" value="ECO:0007669"/>
    <property type="project" value="UniProtKB-UniRule"/>
</dbReference>
<dbReference type="FunFam" id="2.60.300.12:FF:000004">
    <property type="entry name" value="Fe/S biogenesis protein NfuA"/>
    <property type="match status" value="1"/>
</dbReference>
<dbReference type="FunFam" id="3.30.300.130:FF:000002">
    <property type="entry name" value="Fe/S biogenesis protein NfuA"/>
    <property type="match status" value="1"/>
</dbReference>
<dbReference type="Gene3D" id="3.30.300.130">
    <property type="entry name" value="Fe-S cluster assembly (FSCA)"/>
    <property type="match status" value="1"/>
</dbReference>
<dbReference type="Gene3D" id="2.60.300.12">
    <property type="entry name" value="HesB-like domain"/>
    <property type="match status" value="1"/>
</dbReference>
<dbReference type="HAMAP" id="MF_01637">
    <property type="entry name" value="Fe_S_biogen_NfuA"/>
    <property type="match status" value="1"/>
</dbReference>
<dbReference type="InterPro" id="IPR017726">
    <property type="entry name" value="Fe/S_biogenesis_protein_NfuA"/>
</dbReference>
<dbReference type="InterPro" id="IPR000361">
    <property type="entry name" value="FeS_biogenesis"/>
</dbReference>
<dbReference type="InterPro" id="IPR034904">
    <property type="entry name" value="FSCA_dom_sf"/>
</dbReference>
<dbReference type="InterPro" id="IPR035903">
    <property type="entry name" value="HesB-like_dom_sf"/>
</dbReference>
<dbReference type="InterPro" id="IPR001075">
    <property type="entry name" value="NIF_FeS_clus_asmbl_NifU_C"/>
</dbReference>
<dbReference type="NCBIfam" id="NF008392">
    <property type="entry name" value="PRK11190.1"/>
    <property type="match status" value="1"/>
</dbReference>
<dbReference type="NCBIfam" id="TIGR03341">
    <property type="entry name" value="YhgI_GntY"/>
    <property type="match status" value="1"/>
</dbReference>
<dbReference type="PANTHER" id="PTHR11178:SF51">
    <property type="entry name" value="FE_S BIOGENESIS PROTEIN NFUA"/>
    <property type="match status" value="1"/>
</dbReference>
<dbReference type="PANTHER" id="PTHR11178">
    <property type="entry name" value="IRON-SULFUR CLUSTER SCAFFOLD PROTEIN NFU-RELATED"/>
    <property type="match status" value="1"/>
</dbReference>
<dbReference type="Pfam" id="PF01521">
    <property type="entry name" value="Fe-S_biosyn"/>
    <property type="match status" value="1"/>
</dbReference>
<dbReference type="Pfam" id="PF01106">
    <property type="entry name" value="NifU"/>
    <property type="match status" value="1"/>
</dbReference>
<dbReference type="SUPFAM" id="SSF117916">
    <property type="entry name" value="Fe-S cluster assembly (FSCA) domain-like"/>
    <property type="match status" value="1"/>
</dbReference>
<dbReference type="SUPFAM" id="SSF89360">
    <property type="entry name" value="HesB-like domain"/>
    <property type="match status" value="1"/>
</dbReference>
<gene>
    <name evidence="1" type="primary">nfuA</name>
    <name type="ordered locus">STY4285</name>
    <name type="ordered locus">t3995</name>
</gene>
<comment type="function">
    <text evidence="1">Involved in iron-sulfur cluster biogenesis. Binds a 4Fe-4S cluster, can transfer this cluster to apoproteins, and thereby intervenes in the maturation of Fe/S proteins. Could also act as a scaffold/chaperone for damaged Fe/S proteins.</text>
</comment>
<comment type="cofactor">
    <cofactor evidence="1">
        <name>[4Fe-4S] cluster</name>
        <dbReference type="ChEBI" id="CHEBI:49883"/>
    </cofactor>
    <text evidence="1">Binds 1 [4Fe-4S] cluster per subunit. The cluster is presumably bound at the interface of two monomers.</text>
</comment>
<comment type="subunit">
    <text evidence="1">Homodimer.</text>
</comment>
<comment type="similarity">
    <text evidence="1">Belongs to the NfuA family.</text>
</comment>
<keyword id="KW-0004">4Fe-4S</keyword>
<keyword id="KW-0408">Iron</keyword>
<keyword id="KW-0411">Iron-sulfur</keyword>
<keyword id="KW-0479">Metal-binding</keyword>
<organism>
    <name type="scientific">Salmonella typhi</name>
    <dbReference type="NCBI Taxonomy" id="90370"/>
    <lineage>
        <taxon>Bacteria</taxon>
        <taxon>Pseudomonadati</taxon>
        <taxon>Pseudomonadota</taxon>
        <taxon>Gammaproteobacteria</taxon>
        <taxon>Enterobacterales</taxon>
        <taxon>Enterobacteriaceae</taxon>
        <taxon>Salmonella</taxon>
    </lineage>
</organism>
<proteinExistence type="inferred from homology"/>
<evidence type="ECO:0000255" key="1">
    <source>
        <dbReference type="HAMAP-Rule" id="MF_01637"/>
    </source>
</evidence>
<sequence>MIRISDAAQAHFAKLLANQKEGTQIRVFVINPGTPNAECGVSYCPPDAVEATDTALKFDLLTAYVDELSAPYLEDAEIDFVTDQLGSQLTLKAPNAKMRKVADDAPLMERVEYALQSQINPQLAGHGGRVSLMEITDEGYAILQFGGGCNGCSMVDVTLKEGIEKQLLNEFPELKGVRDLTEHQRGEHSYY</sequence>
<feature type="chain" id="PRO_0000209467" description="Fe/S biogenesis protein NfuA">
    <location>
        <begin position="1"/>
        <end position="191"/>
    </location>
</feature>
<feature type="binding site" evidence="1">
    <location>
        <position position="149"/>
    </location>
    <ligand>
        <name>[4Fe-4S] cluster</name>
        <dbReference type="ChEBI" id="CHEBI:49883"/>
    </ligand>
</feature>
<feature type="binding site" evidence="1">
    <location>
        <position position="152"/>
    </location>
    <ligand>
        <name>[4Fe-4S] cluster</name>
        <dbReference type="ChEBI" id="CHEBI:49883"/>
    </ligand>
</feature>
<protein>
    <recommendedName>
        <fullName evidence="1">Fe/S biogenesis protein NfuA</fullName>
    </recommendedName>
</protein>